<name>FUB7_FUSO4</name>
<sequence length="433" mass="47110">MAEQVFQNFETLQLHAGYTPDPHTRSTAVPIYATSSYTFNDSAHGARLFGLKELGNIYSRLMNPTVDVFEKRIAALEGGIAAAATSSGQAAQFLTIATLAKAGDNIVASSHLYGGTYNQLNVLLPRFGIKTKFVRSGKLEDYAAAIDDQTRAIYVESMSNPDYVVPDFEGIAKIAHEHGIPLVVDNTLGAGGYYIRPIEHGADIVVHSATKWIGGHGTTIGGVIVDSGRFNWNKHSERFPEMVEPSPSYHGLKYWEAFGPATFITRIRVEMLRDIGACLSPFSAQQLLLGIETLGLRAERHAQNTEKLAKYFESSPNVSWVLWPGSESHPTYAQAKKYLTRGFGAMLSIGVKGDASAGSKVVDGLKLVSNLANVGDAKSLAIHPWSTTHEQLSEDERLASGVTEDMIRISVGIEHVDDIIADFEQSFQKAYGS</sequence>
<evidence type="ECO:0000250" key="1">
    <source>
        <dbReference type="UniProtKB" id="P06721"/>
    </source>
</evidence>
<evidence type="ECO:0000250" key="2">
    <source>
        <dbReference type="UniProtKB" id="P50125"/>
    </source>
</evidence>
<evidence type="ECO:0000250" key="3">
    <source>
        <dbReference type="UniProtKB" id="S0DUX5"/>
    </source>
</evidence>
<evidence type="ECO:0000269" key="4">
    <source>
    </source>
</evidence>
<evidence type="ECO:0000269" key="5">
    <source>
    </source>
</evidence>
<evidence type="ECO:0000269" key="6">
    <source>
    </source>
</evidence>
<evidence type="ECO:0000269" key="7">
    <source>
    </source>
</evidence>
<evidence type="ECO:0000269" key="8">
    <source>
    </source>
</evidence>
<evidence type="ECO:0000269" key="9">
    <source>
    </source>
</evidence>
<evidence type="ECO:0000269" key="10">
    <source>
    </source>
</evidence>
<evidence type="ECO:0000269" key="11">
    <source>
    </source>
</evidence>
<evidence type="ECO:0000303" key="12">
    <source>
    </source>
</evidence>
<evidence type="ECO:0000305" key="13"/>
<evidence type="ECO:0000305" key="14">
    <source>
    </source>
</evidence>
<dbReference type="EC" id="2.5.1.-" evidence="14"/>
<dbReference type="EMBL" id="DS231721">
    <property type="protein sequence ID" value="KNB17098.1"/>
    <property type="molecule type" value="Genomic_DNA"/>
</dbReference>
<dbReference type="EMBL" id="DS231721">
    <property type="protein sequence ID" value="KNB17099.1"/>
    <property type="molecule type" value="Genomic_DNA"/>
</dbReference>
<dbReference type="EMBL" id="DS231721">
    <property type="protein sequence ID" value="KNB17100.1"/>
    <property type="molecule type" value="Genomic_DNA"/>
</dbReference>
<dbReference type="EMBL" id="DS231721">
    <property type="protein sequence ID" value="KNB17101.1"/>
    <property type="molecule type" value="Genomic_DNA"/>
</dbReference>
<dbReference type="EMBL" id="DS231721">
    <property type="protein sequence ID" value="KNB17102.1"/>
    <property type="molecule type" value="Genomic_DNA"/>
</dbReference>
<dbReference type="EMBL" id="DS231721">
    <property type="protein sequence ID" value="KNB17103.1"/>
    <property type="molecule type" value="Genomic_DNA"/>
</dbReference>
<dbReference type="EMBL" id="DS231721">
    <property type="protein sequence ID" value="KNB17104.1"/>
    <property type="molecule type" value="Genomic_DNA"/>
</dbReference>
<dbReference type="EMBL" id="DS231721">
    <property type="protein sequence ID" value="KNB17105.1"/>
    <property type="molecule type" value="Genomic_DNA"/>
</dbReference>
<dbReference type="EMBL" id="DS231721">
    <property type="protein sequence ID" value="KNB17106.1"/>
    <property type="molecule type" value="Genomic_DNA"/>
</dbReference>
<dbReference type="EMBL" id="DS231721">
    <property type="protein sequence ID" value="KNB17107.1"/>
    <property type="molecule type" value="Genomic_DNA"/>
</dbReference>
<dbReference type="EMBL" id="DS231721">
    <property type="protein sequence ID" value="KNB17108.1"/>
    <property type="molecule type" value="Genomic_DNA"/>
</dbReference>
<dbReference type="EMBL" id="DS231721">
    <property type="protein sequence ID" value="KNB17109.1"/>
    <property type="molecule type" value="Genomic_DNA"/>
</dbReference>
<dbReference type="EMBL" id="DS231721">
    <property type="protein sequence ID" value="KNB17110.1"/>
    <property type="molecule type" value="Genomic_DNA"/>
</dbReference>
<dbReference type="EMBL" id="DS231721">
    <property type="protein sequence ID" value="KNB17111.1"/>
    <property type="molecule type" value="Genomic_DNA"/>
</dbReference>
<dbReference type="EMBL" id="DS231721">
    <property type="protein sequence ID" value="KNB17112.1"/>
    <property type="molecule type" value="Genomic_DNA"/>
</dbReference>
<dbReference type="RefSeq" id="XP_018255143.1">
    <property type="nucleotide sequence ID" value="XM_018395311.1"/>
</dbReference>
<dbReference type="RefSeq" id="XP_018255144.1">
    <property type="nucleotide sequence ID" value="XM_018395312.1"/>
</dbReference>
<dbReference type="RefSeq" id="XP_018255145.1">
    <property type="nucleotide sequence ID" value="XM_018395318.1"/>
</dbReference>
<dbReference type="RefSeq" id="XP_018255146.1">
    <property type="nucleotide sequence ID" value="XM_018395319.1"/>
</dbReference>
<dbReference type="RefSeq" id="XP_018255147.1">
    <property type="nucleotide sequence ID" value="XM_018395320.1"/>
</dbReference>
<dbReference type="RefSeq" id="XP_018255148.1">
    <property type="nucleotide sequence ID" value="XM_018395321.1"/>
</dbReference>
<dbReference type="RefSeq" id="XP_018255149.1">
    <property type="nucleotide sequence ID" value="XM_018395322.1"/>
</dbReference>
<dbReference type="RefSeq" id="XP_018255150.1">
    <property type="nucleotide sequence ID" value="XM_018395323.1"/>
</dbReference>
<dbReference type="RefSeq" id="XP_018255151.1">
    <property type="nucleotide sequence ID" value="XM_018395324.1"/>
</dbReference>
<dbReference type="RefSeq" id="XP_018255152.1">
    <property type="nucleotide sequence ID" value="XM_018395325.1"/>
</dbReference>
<dbReference type="RefSeq" id="XP_018255153.1">
    <property type="nucleotide sequence ID" value="XM_018395313.1"/>
</dbReference>
<dbReference type="RefSeq" id="XP_018255154.1">
    <property type="nucleotide sequence ID" value="XM_018395314.1"/>
</dbReference>
<dbReference type="RefSeq" id="XP_018255155.1">
    <property type="nucleotide sequence ID" value="XM_018395315.1"/>
</dbReference>
<dbReference type="RefSeq" id="XP_018255156.1">
    <property type="nucleotide sequence ID" value="XM_018395316.1"/>
</dbReference>
<dbReference type="RefSeq" id="XP_018255157.1">
    <property type="nucleotide sequence ID" value="XM_018395317.1"/>
</dbReference>
<dbReference type="SMR" id="A0A0D2YG02"/>
<dbReference type="STRING" id="426428.A0A0D2YG02"/>
<dbReference type="EnsemblFungi" id="FOXG_15240T0">
    <property type="protein sequence ID" value="FOXG_15240P0"/>
    <property type="gene ID" value="FOXG_15240"/>
</dbReference>
<dbReference type="GeneID" id="28956316"/>
<dbReference type="KEGG" id="fox:FOXG_15240"/>
<dbReference type="VEuPathDB" id="FungiDB:FOXG_15240"/>
<dbReference type="OMA" id="TTCVQGG"/>
<dbReference type="Proteomes" id="UP000009097">
    <property type="component" value="Unassembled WGS sequence"/>
</dbReference>
<dbReference type="GO" id="GO:0005737">
    <property type="term" value="C:cytoplasm"/>
    <property type="evidence" value="ECO:0007669"/>
    <property type="project" value="TreeGrafter"/>
</dbReference>
<dbReference type="GO" id="GO:0004124">
    <property type="term" value="F:cysteine synthase activity"/>
    <property type="evidence" value="ECO:0007669"/>
    <property type="project" value="TreeGrafter"/>
</dbReference>
<dbReference type="GO" id="GO:0003961">
    <property type="term" value="F:O-acetylhomoserine aminocarboxypropyltransferase activity"/>
    <property type="evidence" value="ECO:0007669"/>
    <property type="project" value="TreeGrafter"/>
</dbReference>
<dbReference type="GO" id="GO:0030170">
    <property type="term" value="F:pyridoxal phosphate binding"/>
    <property type="evidence" value="ECO:0007669"/>
    <property type="project" value="InterPro"/>
</dbReference>
<dbReference type="GO" id="GO:0006535">
    <property type="term" value="P:cysteine biosynthetic process from serine"/>
    <property type="evidence" value="ECO:0007669"/>
    <property type="project" value="TreeGrafter"/>
</dbReference>
<dbReference type="GO" id="GO:0071269">
    <property type="term" value="P:L-homocysteine biosynthetic process"/>
    <property type="evidence" value="ECO:0007669"/>
    <property type="project" value="TreeGrafter"/>
</dbReference>
<dbReference type="GO" id="GO:0019346">
    <property type="term" value="P:transsulfuration"/>
    <property type="evidence" value="ECO:0007669"/>
    <property type="project" value="InterPro"/>
</dbReference>
<dbReference type="CDD" id="cd00614">
    <property type="entry name" value="CGS_like"/>
    <property type="match status" value="1"/>
</dbReference>
<dbReference type="FunFam" id="3.40.640.10:FF:000035">
    <property type="entry name" value="O-succinylhomoserine sulfhydrylase"/>
    <property type="match status" value="1"/>
</dbReference>
<dbReference type="Gene3D" id="3.90.1150.10">
    <property type="entry name" value="Aspartate Aminotransferase, domain 1"/>
    <property type="match status" value="1"/>
</dbReference>
<dbReference type="Gene3D" id="3.40.640.10">
    <property type="entry name" value="Type I PLP-dependent aspartate aminotransferase-like (Major domain)"/>
    <property type="match status" value="1"/>
</dbReference>
<dbReference type="InterPro" id="IPR000277">
    <property type="entry name" value="Cys/Met-Metab_PyrdxlP-dep_enz"/>
</dbReference>
<dbReference type="InterPro" id="IPR054542">
    <property type="entry name" value="Cys_met_metab_PP"/>
</dbReference>
<dbReference type="InterPro" id="IPR006235">
    <property type="entry name" value="OAc-hSer/O-AcSer_sulfhydrylase"/>
</dbReference>
<dbReference type="InterPro" id="IPR015424">
    <property type="entry name" value="PyrdxlP-dep_Trfase"/>
</dbReference>
<dbReference type="InterPro" id="IPR015421">
    <property type="entry name" value="PyrdxlP-dep_Trfase_major"/>
</dbReference>
<dbReference type="InterPro" id="IPR015422">
    <property type="entry name" value="PyrdxlP-dep_Trfase_small"/>
</dbReference>
<dbReference type="NCBIfam" id="TIGR01326">
    <property type="entry name" value="OAH_OAS_sulfhy"/>
    <property type="match status" value="1"/>
</dbReference>
<dbReference type="PANTHER" id="PTHR43797">
    <property type="entry name" value="HOMOCYSTEINE/CYSTEINE SYNTHASE"/>
    <property type="match status" value="1"/>
</dbReference>
<dbReference type="PANTHER" id="PTHR43797:SF2">
    <property type="entry name" value="HOMOCYSTEINE_CYSTEINE SYNTHASE"/>
    <property type="match status" value="1"/>
</dbReference>
<dbReference type="Pfam" id="PF01053">
    <property type="entry name" value="Cys_Met_Meta_PP"/>
    <property type="match status" value="1"/>
</dbReference>
<dbReference type="PIRSF" id="PIRSF001434">
    <property type="entry name" value="CGS"/>
    <property type="match status" value="1"/>
</dbReference>
<dbReference type="SUPFAM" id="SSF53383">
    <property type="entry name" value="PLP-dependent transferases"/>
    <property type="match status" value="1"/>
</dbReference>
<dbReference type="PROSITE" id="PS00868">
    <property type="entry name" value="CYS_MET_METAB_PP"/>
    <property type="match status" value="1"/>
</dbReference>
<reference key="1">
    <citation type="journal article" date="2010" name="Nature">
        <title>Comparative genomics reveals mobile pathogenicity chromosomes in Fusarium.</title>
        <authorList>
            <person name="Ma L.-J."/>
            <person name="van der Does H.C."/>
            <person name="Borkovich K.A."/>
            <person name="Coleman J.J."/>
            <person name="Daboussi M.-J."/>
            <person name="Di Pietro A."/>
            <person name="Dufresne M."/>
            <person name="Freitag M."/>
            <person name="Grabherr M."/>
            <person name="Henrissat B."/>
            <person name="Houterman P.M."/>
            <person name="Kang S."/>
            <person name="Shim W.-B."/>
            <person name="Woloshuk C."/>
            <person name="Xie X."/>
            <person name="Xu J.-R."/>
            <person name="Antoniw J."/>
            <person name="Baker S.E."/>
            <person name="Bluhm B.H."/>
            <person name="Breakspear A."/>
            <person name="Brown D.W."/>
            <person name="Butchko R.A.E."/>
            <person name="Chapman S."/>
            <person name="Coulson R."/>
            <person name="Coutinho P.M."/>
            <person name="Danchin E.G.J."/>
            <person name="Diener A."/>
            <person name="Gale L.R."/>
            <person name="Gardiner D.M."/>
            <person name="Goff S."/>
            <person name="Hammond-Kosack K.E."/>
            <person name="Hilburn K."/>
            <person name="Hua-Van A."/>
            <person name="Jonkers W."/>
            <person name="Kazan K."/>
            <person name="Kodira C.D."/>
            <person name="Koehrsen M."/>
            <person name="Kumar L."/>
            <person name="Lee Y.-H."/>
            <person name="Li L."/>
            <person name="Manners J.M."/>
            <person name="Miranda-Saavedra D."/>
            <person name="Mukherjee M."/>
            <person name="Park G."/>
            <person name="Park J."/>
            <person name="Park S.-Y."/>
            <person name="Proctor R.H."/>
            <person name="Regev A."/>
            <person name="Ruiz-Roldan M.C."/>
            <person name="Sain D."/>
            <person name="Sakthikumar S."/>
            <person name="Sykes S."/>
            <person name="Schwartz D.C."/>
            <person name="Turgeon B.G."/>
            <person name="Wapinski I."/>
            <person name="Yoder O."/>
            <person name="Young S."/>
            <person name="Zeng Q."/>
            <person name="Zhou S."/>
            <person name="Galagan J."/>
            <person name="Cuomo C.A."/>
            <person name="Kistler H.C."/>
            <person name="Rep M."/>
        </authorList>
    </citation>
    <scope>NUCLEOTIDE SEQUENCE [LARGE SCALE GENOMIC DNA]</scope>
    <source>
        <strain>4287 / CBS 123668 / FGSC 9935 / NRRL 34936</strain>
    </source>
</reference>
<reference key="2">
    <citation type="submission" date="2015-03" db="UniProtKB">
        <authorList>
            <consortium name="EnsemblFungi"/>
        </authorList>
    </citation>
    <scope>IDENTIFICATION</scope>
    <source>
        <strain>4287 / CBS 123668 / FGSC 9935 / NRRL 34936</strain>
    </source>
</reference>
<reference key="3">
    <citation type="journal article" date="2006" name="Planta">
        <title>Fusaric acid induces apoptosis in saffron root-tip cells: roles of caspase-like activity, cytochrome c, and H2O2.</title>
        <authorList>
            <person name="Samadi L."/>
            <person name="Shahsavan Behboodi B."/>
        </authorList>
    </citation>
    <scope>BIOTECHNOLOGY</scope>
</reference>
<reference key="4">
    <citation type="journal article" date="2008" name="J. Appl. Microbiol.">
        <title>Bikaverin and fusaric acid from Fusarium oxysporum show antioomycete activity against Phytophthora infestans.</title>
        <authorList>
            <person name="Son S.W."/>
            <person name="Kim H.Y."/>
            <person name="Choi G.J."/>
            <person name="Lim H.K."/>
            <person name="Jang K.S."/>
            <person name="Lee S.O."/>
            <person name="Lee S."/>
            <person name="Sung N.D."/>
            <person name="Kim J.C."/>
        </authorList>
    </citation>
    <scope>BIOTECHNOLOGY</scope>
</reference>
<reference key="5">
    <citation type="journal article" date="2011" name="Arch. Pharm. Res.">
        <title>Antimycobacterial activity of fusaric acid from a mangrove endophyte and its metal complexes.</title>
        <authorList>
            <person name="Pan J.H."/>
            <person name="Chen Y."/>
            <person name="Huang Y.H."/>
            <person name="Tao Y.W."/>
            <person name="Wang J."/>
            <person name="Li Y."/>
            <person name="Peng Y."/>
            <person name="Dong T."/>
            <person name="Lai X.M."/>
            <person name="Lin Y.C."/>
        </authorList>
    </citation>
    <scope>BIOTECHNOLOGY</scope>
</reference>
<reference key="6">
    <citation type="journal article" date="2011" name="Toxicon">
        <title>Phytotoxicity of fusaric acid and analogs to cotton.</title>
        <authorList>
            <person name="Stipanovic R.D."/>
            <person name="Puckhaber L.S."/>
            <person name="Liu J."/>
            <person name="Bell A.A."/>
        </authorList>
    </citation>
    <scope>BIOTECHNOLOGY</scope>
</reference>
<reference key="7">
    <citation type="journal article" date="2012" name="Planta Med.">
        <title>In vitro acanthamoebicidal activity of fusaric acid and dehydrofusaric acid from an endophytic fungus Fusarium sp. Tlau3.</title>
        <authorList>
            <person name="Boonman N."/>
            <person name="Prachya S."/>
            <person name="Boonmee A."/>
            <person name="Kittakoop P."/>
            <person name="Wiyakrutta S."/>
            <person name="Sriubolmas N."/>
            <person name="Warit S."/>
            <person name="Dharmkrong-At Chusattayanond A."/>
        </authorList>
    </citation>
    <scope>BIOTECHNOLOGY</scope>
</reference>
<reference key="8">
    <citation type="journal article" date="2013" name="Planta">
        <title>Fusaric acid induction of programmed cell death modulated through nitric oxide signalling in tobacco suspension cells.</title>
        <authorList>
            <person name="Jiao J."/>
            <person name="Zhou B."/>
            <person name="Zhu X."/>
            <person name="Gao Z."/>
            <person name="Liang Y."/>
        </authorList>
    </citation>
    <scope>BIOTECHNOLOGY</scope>
</reference>
<reference key="9">
    <citation type="journal article" date="2013" name="PLoS ONE">
        <title>Contamination of bananas with beauvericin and fusaric acid produced by Fusarium oxysporum f. sp. cubense.</title>
        <authorList>
            <person name="Li C."/>
            <person name="Zuo C."/>
            <person name="Deng G."/>
            <person name="Kuang R."/>
            <person name="Yang Q."/>
            <person name="Hu C."/>
            <person name="Sheng O."/>
            <person name="Zhang S."/>
            <person name="Ma L."/>
            <person name="Wei Y."/>
            <person name="Yang J."/>
            <person name="Liu S."/>
            <person name="Biswas M.K."/>
            <person name="Viljoen A."/>
            <person name="Yi G."/>
        </authorList>
    </citation>
    <scope>BIOTECHNOLOGY</scope>
</reference>
<reference key="10">
    <citation type="journal article" date="2015" name="Mol. Plant Microbe Interact.">
        <title>Identification of a 12-gene fusaric acid biosynthetic gene cluster in Fusarium species through comparative and functional genomics.</title>
        <authorList>
            <person name="Brown D.W."/>
            <person name="Lee S.H."/>
            <person name="Kim L.H."/>
            <person name="Ryu J.G."/>
            <person name="Lee S."/>
            <person name="Seo Y."/>
            <person name="Kim Y.H."/>
            <person name="Busman M."/>
            <person name="Yun S.H."/>
            <person name="Proctor R.H."/>
            <person name="Lee T."/>
        </authorList>
    </citation>
    <scope>FUNCTION</scope>
    <scope>CATALYTIC ACTIVITY</scope>
</reference>
<gene>
    <name evidence="12" type="primary">FUB7</name>
    <name type="ORF">FOXG_15240</name>
</gene>
<comment type="function">
    <text evidence="3 11">Sulfhydrylase; part of the gene cluster that mediates the biosynthesis of fusaric acid, a mycotoxin with low to moderate toxicity to animals and humans, but with high phytotoxic properties (PubMed:25372119). L-aspartate is suggested as fusaric acid amino acid precursor that is activated and further processed to O-acetyl-L-homoserine by cluster enzymes aspartate kinase FUB3 and homoserine O-acetyltransferase FUB5, as well as enzymes of the primary metabolism (By similarity). The polyketide synthase (PKS) FUB1 generates the triketide trans-2-hexenal which is presumptively released by the hydrolase FUB4 and linked to the NRPS-bound amino acid precursor by NAD(P)-dependent dehydrogenase FUB6 (By similarity). FUB1, FUB4, and the non-canonical NRPS Fub8 may form an enzyme complex (By similarity). Further processing of the NRPS-bound intermediate might be carried out by FUB6 and the sulfhydrylase FUB7, enabling a spontaneous electrocyclization to close the carbon backbone of fusaric acid (By similarity). Dihydrofusaric acid is likely to be released via reduction by the thioester reductase (TR) domain of FUB8 whereupon the final oxidation to fusaric acid may (also) be performed by the FMN-dependent dehydrogenase FUB9 (By similarity).</text>
</comment>
<comment type="cofactor">
    <cofactor evidence="2">
        <name>pyridoxal 5'-phosphate</name>
        <dbReference type="ChEBI" id="CHEBI:597326"/>
    </cofactor>
</comment>
<comment type="pathway">
    <text evidence="11">Mycotoxin biosynthesis.</text>
</comment>
<comment type="biotechnology">
    <text evidence="4 5 6 7 8 9 10">Fusaric acid is phytotoxic to plants such as cotton and banana (PubMed:20955724, PubMed:23922960). It has been shown to induce programmed cell death in plants (PubMed:16868776, PubMed:23838885). In addition to a mild toxicity to animals, fusaric acid exhibits acanthamoebicidal, antioomycete, and antimycobacterial activities (PubMed:17927749, PubMed:21811925, PubMed:22864988).</text>
</comment>
<comment type="similarity">
    <text evidence="13">Belongs to the trans-sulfuration enzymes family.</text>
</comment>
<feature type="chain" id="PRO_0000437338" description="Sulfhydrylase FUB7">
    <location>
        <begin position="1"/>
        <end position="433"/>
    </location>
</feature>
<feature type="modified residue" description="N6-(pyridoxal phosphate)lysine" evidence="1">
    <location>
        <position position="211"/>
    </location>
</feature>
<accession>A0A0D2YG02</accession>
<keyword id="KW-0663">Pyridoxal phosphate</keyword>
<keyword id="KW-1185">Reference proteome</keyword>
<keyword id="KW-0808">Transferase</keyword>
<protein>
    <recommendedName>
        <fullName evidence="12">Sulfhydrylase FUB7</fullName>
        <ecNumber evidence="14">2.5.1.-</ecNumber>
    </recommendedName>
    <alternativeName>
        <fullName evidence="12">Fusaric acid biosynthesis protein 7</fullName>
    </alternativeName>
</protein>
<organism>
    <name type="scientific">Fusarium oxysporum f. sp. lycopersici (strain 4287 / CBS 123668 / FGSC 9935 / NRRL 34936)</name>
    <name type="common">Fusarium vascular wilt of tomato</name>
    <dbReference type="NCBI Taxonomy" id="426428"/>
    <lineage>
        <taxon>Eukaryota</taxon>
        <taxon>Fungi</taxon>
        <taxon>Dikarya</taxon>
        <taxon>Ascomycota</taxon>
        <taxon>Pezizomycotina</taxon>
        <taxon>Sordariomycetes</taxon>
        <taxon>Hypocreomycetidae</taxon>
        <taxon>Hypocreales</taxon>
        <taxon>Nectriaceae</taxon>
        <taxon>Fusarium</taxon>
        <taxon>Fusarium oxysporum species complex</taxon>
    </lineage>
</organism>
<proteinExistence type="evidence at protein level"/>